<keyword id="KW-0489">Methyltransferase</keyword>
<keyword id="KW-1185">Reference proteome</keyword>
<keyword id="KW-0694">RNA-binding</keyword>
<keyword id="KW-0698">rRNA processing</keyword>
<keyword id="KW-0949">S-adenosyl-L-methionine</keyword>
<keyword id="KW-0808">Transferase</keyword>
<accession>Q9VDZ4</accession>
<comment type="function">
    <text evidence="2">S-adenosyl-L-methionine-dependent methyltransferase that specifically methylates the C(5) position of a cytosine in 28S rRNA.</text>
</comment>
<comment type="catalytic activity">
    <reaction evidence="2">
        <text>a cytidine in 28S rRNA + S-adenosyl-L-methionine = a 5-methylcytidine in 28S rRNA + S-adenosyl-L-homocysteine + H(+)</text>
        <dbReference type="Rhea" id="RHEA:47788"/>
        <dbReference type="Rhea" id="RHEA-COMP:11915"/>
        <dbReference type="Rhea" id="RHEA-COMP:11916"/>
        <dbReference type="ChEBI" id="CHEBI:15378"/>
        <dbReference type="ChEBI" id="CHEBI:57856"/>
        <dbReference type="ChEBI" id="CHEBI:59789"/>
        <dbReference type="ChEBI" id="CHEBI:74483"/>
        <dbReference type="ChEBI" id="CHEBI:82748"/>
    </reaction>
    <physiologicalReaction direction="left-to-right" evidence="2">
        <dbReference type="Rhea" id="RHEA:47789"/>
    </physiologicalReaction>
</comment>
<comment type="disruption phenotype">
    <text evidence="4">Increased lifespan and stress resistance.</text>
</comment>
<comment type="similarity">
    <text evidence="3">Belongs to the class I-like SAM-binding methyltransferase superfamily. RsmB/NOP family.</text>
</comment>
<feature type="chain" id="PRO_0000449823" description="28S rRNA (cytosine-C(5))-methyltransferase">
    <location>
        <begin position="1"/>
        <end position="433"/>
    </location>
</feature>
<feature type="active site" description="Nucleophile" evidence="3">
    <location>
        <position position="357"/>
    </location>
</feature>
<feature type="binding site" evidence="1">
    <location>
        <begin position="235"/>
        <end position="241"/>
    </location>
    <ligand>
        <name>S-adenosyl-L-methionine</name>
        <dbReference type="ChEBI" id="CHEBI:59789"/>
    </ligand>
</feature>
<feature type="binding site" evidence="3">
    <location>
        <position position="259"/>
    </location>
    <ligand>
        <name>S-adenosyl-L-methionine</name>
        <dbReference type="ChEBI" id="CHEBI:59789"/>
    </ligand>
</feature>
<feature type="binding site" evidence="3">
    <location>
        <position position="286"/>
    </location>
    <ligand>
        <name>S-adenosyl-L-methionine</name>
        <dbReference type="ChEBI" id="CHEBI:59789"/>
    </ligand>
</feature>
<feature type="binding site" evidence="3">
    <location>
        <position position="304"/>
    </location>
    <ligand>
        <name>S-adenosyl-L-methionine</name>
        <dbReference type="ChEBI" id="CHEBI:59789"/>
    </ligand>
</feature>
<protein>
    <recommendedName>
        <fullName evidence="6">28S rRNA (cytosine-C(5))-methyltransferase</fullName>
        <ecNumber evidence="2">2.1.1.-</ecNumber>
    </recommendedName>
    <alternativeName>
        <fullName evidence="6">NOL1/NOP2/Sun domain family member 5</fullName>
    </alternativeName>
</protein>
<proteinExistence type="evidence at transcript level"/>
<dbReference type="EC" id="2.1.1.-" evidence="2"/>
<dbReference type="EMBL" id="AE014297">
    <property type="protein sequence ID" value="AAF55642.1"/>
    <property type="molecule type" value="Genomic_DNA"/>
</dbReference>
<dbReference type="EMBL" id="AY069449">
    <property type="protein sequence ID" value="AAL39594.1"/>
    <property type="molecule type" value="mRNA"/>
</dbReference>
<dbReference type="RefSeq" id="NP_650787.1">
    <property type="nucleotide sequence ID" value="NM_142530.3"/>
</dbReference>
<dbReference type="SMR" id="Q9VDZ4"/>
<dbReference type="FunCoup" id="Q9VDZ4">
    <property type="interactions" value="1427"/>
</dbReference>
<dbReference type="IntAct" id="Q9VDZ4">
    <property type="interactions" value="8"/>
</dbReference>
<dbReference type="STRING" id="7227.FBpp0289234"/>
<dbReference type="PaxDb" id="7227-FBpp0289234"/>
<dbReference type="DNASU" id="7354421"/>
<dbReference type="EnsemblMetazoa" id="FBtr0299957">
    <property type="protein sequence ID" value="FBpp0289234"/>
    <property type="gene ID" value="FBgn0259704"/>
</dbReference>
<dbReference type="GeneID" id="7354421"/>
<dbReference type="KEGG" id="dme:Dmel_CG42358"/>
<dbReference type="AGR" id="FB:FBgn0259704"/>
<dbReference type="CTD" id="55695"/>
<dbReference type="FlyBase" id="FBgn0259704">
    <property type="gene designation" value="Nsun5"/>
</dbReference>
<dbReference type="VEuPathDB" id="VectorBase:FBgn0259704"/>
<dbReference type="eggNOG" id="KOG2360">
    <property type="taxonomic scope" value="Eukaryota"/>
</dbReference>
<dbReference type="GeneTree" id="ENSGT00940000155974"/>
<dbReference type="HOGENOM" id="CLU_005316_7_5_1"/>
<dbReference type="InParanoid" id="Q9VDZ4"/>
<dbReference type="OMA" id="SFKSRIY"/>
<dbReference type="OrthoDB" id="435282at2759"/>
<dbReference type="PhylomeDB" id="Q9VDZ4"/>
<dbReference type="BioGRID-ORCS" id="7354421">
    <property type="hits" value="0 hits in 3 CRISPR screens"/>
</dbReference>
<dbReference type="GenomeRNAi" id="7354421"/>
<dbReference type="PRO" id="PR:Q9VDZ4"/>
<dbReference type="Proteomes" id="UP000000803">
    <property type="component" value="Chromosome 3R"/>
</dbReference>
<dbReference type="Bgee" id="FBgn0259704">
    <property type="expression patterns" value="Expressed in early-mid elongation-stage spermatid (Drosophila) in testis and 106 other cell types or tissues"/>
</dbReference>
<dbReference type="GO" id="GO:0005730">
    <property type="term" value="C:nucleolus"/>
    <property type="evidence" value="ECO:0000318"/>
    <property type="project" value="GO_Central"/>
</dbReference>
<dbReference type="GO" id="GO:0003723">
    <property type="term" value="F:RNA binding"/>
    <property type="evidence" value="ECO:0007669"/>
    <property type="project" value="UniProtKB-KW"/>
</dbReference>
<dbReference type="GO" id="GO:0009383">
    <property type="term" value="F:rRNA (cytosine-C5-)-methyltransferase activity"/>
    <property type="evidence" value="ECO:0000250"/>
    <property type="project" value="FlyBase"/>
</dbReference>
<dbReference type="GO" id="GO:0050829">
    <property type="term" value="P:defense response to Gram-negative bacterium"/>
    <property type="evidence" value="ECO:0007001"/>
    <property type="project" value="FlyBase"/>
</dbReference>
<dbReference type="GO" id="GO:0045089">
    <property type="term" value="P:positive regulation of innate immune response"/>
    <property type="evidence" value="ECO:0007001"/>
    <property type="project" value="FlyBase"/>
</dbReference>
<dbReference type="GO" id="GO:0070475">
    <property type="term" value="P:rRNA base methylation"/>
    <property type="evidence" value="ECO:0000318"/>
    <property type="project" value="GO_Central"/>
</dbReference>
<dbReference type="FunFam" id="3.40.50.150:FF:000733">
    <property type="entry name" value="GD20129"/>
    <property type="match status" value="1"/>
</dbReference>
<dbReference type="FunFam" id="3.30.70.1170:FF:000015">
    <property type="entry name" value="Putative methyltransferase NSUN7"/>
    <property type="match status" value="1"/>
</dbReference>
<dbReference type="Gene3D" id="3.30.70.1170">
    <property type="entry name" value="Sun protein, domain 3"/>
    <property type="match status" value="1"/>
</dbReference>
<dbReference type="Gene3D" id="3.40.50.150">
    <property type="entry name" value="Vaccinia Virus protein VP39"/>
    <property type="match status" value="1"/>
</dbReference>
<dbReference type="InterPro" id="IPR049560">
    <property type="entry name" value="MeTrfase_RsmB-F_NOP2_cat"/>
</dbReference>
<dbReference type="InterPro" id="IPR001678">
    <property type="entry name" value="MeTrfase_RsmB-F_NOP2_dom"/>
</dbReference>
<dbReference type="InterPro" id="IPR049561">
    <property type="entry name" value="NSUN5_7_fdxn-like"/>
</dbReference>
<dbReference type="InterPro" id="IPR048889">
    <property type="entry name" value="NSUN5_RCM1_N"/>
</dbReference>
<dbReference type="InterPro" id="IPR023267">
    <property type="entry name" value="RCMT"/>
</dbReference>
<dbReference type="InterPro" id="IPR029063">
    <property type="entry name" value="SAM-dependent_MTases_sf"/>
</dbReference>
<dbReference type="PANTHER" id="PTHR22807:SF4">
    <property type="entry name" value="28S RRNA (CYTOSINE-C(5))-METHYLTRANSFERASE"/>
    <property type="match status" value="1"/>
</dbReference>
<dbReference type="PANTHER" id="PTHR22807">
    <property type="entry name" value="NOP2 YEAST -RELATED NOL1/NOP2/FMU SUN DOMAIN-CONTAINING"/>
    <property type="match status" value="1"/>
</dbReference>
<dbReference type="Pfam" id="PF01189">
    <property type="entry name" value="Methyltr_RsmB-F"/>
    <property type="match status" value="1"/>
</dbReference>
<dbReference type="Pfam" id="PF21148">
    <property type="entry name" value="NSUN5_fdxn-like"/>
    <property type="match status" value="1"/>
</dbReference>
<dbReference type="Pfam" id="PF21153">
    <property type="entry name" value="NSUN5_N"/>
    <property type="match status" value="1"/>
</dbReference>
<dbReference type="PRINTS" id="PR02008">
    <property type="entry name" value="RCMTFAMILY"/>
</dbReference>
<dbReference type="SUPFAM" id="SSF53335">
    <property type="entry name" value="S-adenosyl-L-methionine-dependent methyltransferases"/>
    <property type="match status" value="1"/>
</dbReference>
<dbReference type="PROSITE" id="PS51686">
    <property type="entry name" value="SAM_MT_RSMB_NOP"/>
    <property type="match status" value="1"/>
</dbReference>
<organism>
    <name type="scientific">Drosophila melanogaster</name>
    <name type="common">Fruit fly</name>
    <dbReference type="NCBI Taxonomy" id="7227"/>
    <lineage>
        <taxon>Eukaryota</taxon>
        <taxon>Metazoa</taxon>
        <taxon>Ecdysozoa</taxon>
        <taxon>Arthropoda</taxon>
        <taxon>Hexapoda</taxon>
        <taxon>Insecta</taxon>
        <taxon>Pterygota</taxon>
        <taxon>Neoptera</taxon>
        <taxon>Endopterygota</taxon>
        <taxon>Diptera</taxon>
        <taxon>Brachycera</taxon>
        <taxon>Muscomorpha</taxon>
        <taxon>Ephydroidea</taxon>
        <taxon>Drosophilidae</taxon>
        <taxon>Drosophila</taxon>
        <taxon>Sophophora</taxon>
    </lineage>
</organism>
<name>NSUN5_DROME</name>
<sequence>MSKKPHSIKVPTQYRATAKILKAALEQQKCIKTLIFAEKHARTRSLHTVLKKFSENRVALEKAIEETGLLRDNPSFDPSLAKILVTELLFGRKELNGESKPVQTVRSYKDRLLNSIRDFGVQRKEPNPRYVRINTNLYSLAEALDYLHKSDWRRKELPADASYADFLTAIKSLAENEFMTDLHVEGVLIFPAKWSNYWVRHPLVHSKRFILQNKATCLAAELLAPPSGATVLDMCAAPGMKTVHICNVMQNKGCIYSVEQDHVRYNTLCEITKDAGCDIVKPILGDALNLTPERFPDVEYILVDPSCSGSGMQNRMTVCDEPKEDKRLQKLQGLQIKILSHAMGAFPNVKRIAYCTCSLWKEENEQVVQRCLQLNPSFKLLSCKKALRNKWHNVGDKDYPNIGKNVLYCQPDSDLTDGIFLALFEKRREGEKD</sequence>
<reference key="1">
    <citation type="journal article" date="2000" name="Science">
        <title>The genome sequence of Drosophila melanogaster.</title>
        <authorList>
            <person name="Adams M.D."/>
            <person name="Celniker S.E."/>
            <person name="Holt R.A."/>
            <person name="Evans C.A."/>
            <person name="Gocayne J.D."/>
            <person name="Amanatides P.G."/>
            <person name="Scherer S.E."/>
            <person name="Li P.W."/>
            <person name="Hoskins R.A."/>
            <person name="Galle R.F."/>
            <person name="George R.A."/>
            <person name="Lewis S.E."/>
            <person name="Richards S."/>
            <person name="Ashburner M."/>
            <person name="Henderson S.N."/>
            <person name="Sutton G.G."/>
            <person name="Wortman J.R."/>
            <person name="Yandell M.D."/>
            <person name="Zhang Q."/>
            <person name="Chen L.X."/>
            <person name="Brandon R.C."/>
            <person name="Rogers Y.-H.C."/>
            <person name="Blazej R.G."/>
            <person name="Champe M."/>
            <person name="Pfeiffer B.D."/>
            <person name="Wan K.H."/>
            <person name="Doyle C."/>
            <person name="Baxter E.G."/>
            <person name="Helt G."/>
            <person name="Nelson C.R."/>
            <person name="Miklos G.L.G."/>
            <person name="Abril J.F."/>
            <person name="Agbayani A."/>
            <person name="An H.-J."/>
            <person name="Andrews-Pfannkoch C."/>
            <person name="Baldwin D."/>
            <person name="Ballew R.M."/>
            <person name="Basu A."/>
            <person name="Baxendale J."/>
            <person name="Bayraktaroglu L."/>
            <person name="Beasley E.M."/>
            <person name="Beeson K.Y."/>
            <person name="Benos P.V."/>
            <person name="Berman B.P."/>
            <person name="Bhandari D."/>
            <person name="Bolshakov S."/>
            <person name="Borkova D."/>
            <person name="Botchan M.R."/>
            <person name="Bouck J."/>
            <person name="Brokstein P."/>
            <person name="Brottier P."/>
            <person name="Burtis K.C."/>
            <person name="Busam D.A."/>
            <person name="Butler H."/>
            <person name="Cadieu E."/>
            <person name="Center A."/>
            <person name="Chandra I."/>
            <person name="Cherry J.M."/>
            <person name="Cawley S."/>
            <person name="Dahlke C."/>
            <person name="Davenport L.B."/>
            <person name="Davies P."/>
            <person name="de Pablos B."/>
            <person name="Delcher A."/>
            <person name="Deng Z."/>
            <person name="Mays A.D."/>
            <person name="Dew I."/>
            <person name="Dietz S.M."/>
            <person name="Dodson K."/>
            <person name="Doup L.E."/>
            <person name="Downes M."/>
            <person name="Dugan-Rocha S."/>
            <person name="Dunkov B.C."/>
            <person name="Dunn P."/>
            <person name="Durbin K.J."/>
            <person name="Evangelista C.C."/>
            <person name="Ferraz C."/>
            <person name="Ferriera S."/>
            <person name="Fleischmann W."/>
            <person name="Fosler C."/>
            <person name="Gabrielian A.E."/>
            <person name="Garg N.S."/>
            <person name="Gelbart W.M."/>
            <person name="Glasser K."/>
            <person name="Glodek A."/>
            <person name="Gong F."/>
            <person name="Gorrell J.H."/>
            <person name="Gu Z."/>
            <person name="Guan P."/>
            <person name="Harris M."/>
            <person name="Harris N.L."/>
            <person name="Harvey D.A."/>
            <person name="Heiman T.J."/>
            <person name="Hernandez J.R."/>
            <person name="Houck J."/>
            <person name="Hostin D."/>
            <person name="Houston K.A."/>
            <person name="Howland T.J."/>
            <person name="Wei M.-H."/>
            <person name="Ibegwam C."/>
            <person name="Jalali M."/>
            <person name="Kalush F."/>
            <person name="Karpen G.H."/>
            <person name="Ke Z."/>
            <person name="Kennison J.A."/>
            <person name="Ketchum K.A."/>
            <person name="Kimmel B.E."/>
            <person name="Kodira C.D."/>
            <person name="Kraft C.L."/>
            <person name="Kravitz S."/>
            <person name="Kulp D."/>
            <person name="Lai Z."/>
            <person name="Lasko P."/>
            <person name="Lei Y."/>
            <person name="Levitsky A.A."/>
            <person name="Li J.H."/>
            <person name="Li Z."/>
            <person name="Liang Y."/>
            <person name="Lin X."/>
            <person name="Liu X."/>
            <person name="Mattei B."/>
            <person name="McIntosh T.C."/>
            <person name="McLeod M.P."/>
            <person name="McPherson D."/>
            <person name="Merkulov G."/>
            <person name="Milshina N.V."/>
            <person name="Mobarry C."/>
            <person name="Morris J."/>
            <person name="Moshrefi A."/>
            <person name="Mount S.M."/>
            <person name="Moy M."/>
            <person name="Murphy B."/>
            <person name="Murphy L."/>
            <person name="Muzny D.M."/>
            <person name="Nelson D.L."/>
            <person name="Nelson D.R."/>
            <person name="Nelson K.A."/>
            <person name="Nixon K."/>
            <person name="Nusskern D.R."/>
            <person name="Pacleb J.M."/>
            <person name="Palazzolo M."/>
            <person name="Pittman G.S."/>
            <person name="Pan S."/>
            <person name="Pollard J."/>
            <person name="Puri V."/>
            <person name="Reese M.G."/>
            <person name="Reinert K."/>
            <person name="Remington K."/>
            <person name="Saunders R.D.C."/>
            <person name="Scheeler F."/>
            <person name="Shen H."/>
            <person name="Shue B.C."/>
            <person name="Siden-Kiamos I."/>
            <person name="Simpson M."/>
            <person name="Skupski M.P."/>
            <person name="Smith T.J."/>
            <person name="Spier E."/>
            <person name="Spradling A.C."/>
            <person name="Stapleton M."/>
            <person name="Strong R."/>
            <person name="Sun E."/>
            <person name="Svirskas R."/>
            <person name="Tector C."/>
            <person name="Turner R."/>
            <person name="Venter E."/>
            <person name="Wang A.H."/>
            <person name="Wang X."/>
            <person name="Wang Z.-Y."/>
            <person name="Wassarman D.A."/>
            <person name="Weinstock G.M."/>
            <person name="Weissenbach J."/>
            <person name="Williams S.M."/>
            <person name="Woodage T."/>
            <person name="Worley K.C."/>
            <person name="Wu D."/>
            <person name="Yang S."/>
            <person name="Yao Q.A."/>
            <person name="Ye J."/>
            <person name="Yeh R.-F."/>
            <person name="Zaveri J.S."/>
            <person name="Zhan M."/>
            <person name="Zhang G."/>
            <person name="Zhao Q."/>
            <person name="Zheng L."/>
            <person name="Zheng X.H."/>
            <person name="Zhong F.N."/>
            <person name="Zhong W."/>
            <person name="Zhou X."/>
            <person name="Zhu S.C."/>
            <person name="Zhu X."/>
            <person name="Smith H.O."/>
            <person name="Gibbs R.A."/>
            <person name="Myers E.W."/>
            <person name="Rubin G.M."/>
            <person name="Venter J.C."/>
        </authorList>
    </citation>
    <scope>NUCLEOTIDE SEQUENCE [LARGE SCALE GENOMIC DNA]</scope>
    <source>
        <strain>Berkeley</strain>
    </source>
</reference>
<reference key="2">
    <citation type="journal article" date="2002" name="Genome Biol.">
        <title>Annotation of the Drosophila melanogaster euchromatic genome: a systematic review.</title>
        <authorList>
            <person name="Misra S."/>
            <person name="Crosby M.A."/>
            <person name="Mungall C.J."/>
            <person name="Matthews B.B."/>
            <person name="Campbell K.S."/>
            <person name="Hradecky P."/>
            <person name="Huang Y."/>
            <person name="Kaminker J.S."/>
            <person name="Millburn G.H."/>
            <person name="Prochnik S.E."/>
            <person name="Smith C.D."/>
            <person name="Tupy J.L."/>
            <person name="Whitfield E.J."/>
            <person name="Bayraktaroglu L."/>
            <person name="Berman B.P."/>
            <person name="Bettencourt B.R."/>
            <person name="Celniker S.E."/>
            <person name="de Grey A.D.N.J."/>
            <person name="Drysdale R.A."/>
            <person name="Harris N.L."/>
            <person name="Richter J."/>
            <person name="Russo S."/>
            <person name="Schroeder A.J."/>
            <person name="Shu S.Q."/>
            <person name="Stapleton M."/>
            <person name="Yamada C."/>
            <person name="Ashburner M."/>
            <person name="Gelbart W.M."/>
            <person name="Rubin G.M."/>
            <person name="Lewis S.E."/>
        </authorList>
    </citation>
    <scope>GENOME REANNOTATION</scope>
    <source>
        <strain>Berkeley</strain>
    </source>
</reference>
<reference key="3">
    <citation type="journal article" date="2002" name="Genome Biol.">
        <title>A Drosophila full-length cDNA resource.</title>
        <authorList>
            <person name="Stapleton M."/>
            <person name="Carlson J.W."/>
            <person name="Brokstein P."/>
            <person name="Yu C."/>
            <person name="Champe M."/>
            <person name="George R.A."/>
            <person name="Guarin H."/>
            <person name="Kronmiller B."/>
            <person name="Pacleb J.M."/>
            <person name="Park S."/>
            <person name="Wan K.H."/>
            <person name="Rubin G.M."/>
            <person name="Celniker S.E."/>
        </authorList>
    </citation>
    <scope>NUCLEOTIDE SEQUENCE [LARGE SCALE MRNA]</scope>
    <source>
        <strain>Berkeley</strain>
        <tissue>Embryo</tissue>
    </source>
</reference>
<reference key="4">
    <citation type="journal article" date="2015" name="Nat. Commun.">
        <title>Methylation of ribosomal RNA by NSUN5 is a conserved mechanism modulating organismal lifespan.</title>
        <authorList>
            <person name="Schosserer M."/>
            <person name="Minois N."/>
            <person name="Angerer T.B."/>
            <person name="Amring M."/>
            <person name="Dellago H."/>
            <person name="Harreither E."/>
            <person name="Calle-Perez A."/>
            <person name="Pircher A."/>
            <person name="Gerstl M.P."/>
            <person name="Pfeifenberger S."/>
            <person name="Brandl C."/>
            <person name="Sonntagbauer M."/>
            <person name="Kriegner A."/>
            <person name="Linder A."/>
            <person name="Weinhaeusel A."/>
            <person name="Mohr T."/>
            <person name="Steiger M."/>
            <person name="Mattanovich D."/>
            <person name="Rinnerthaler M."/>
            <person name="Karl T."/>
            <person name="Sharma S."/>
            <person name="Entian K.D."/>
            <person name="Kos M."/>
            <person name="Breitenbach M."/>
            <person name="Wilson I.B."/>
            <person name="Polacek N."/>
            <person name="Grillari-Voglauer R."/>
            <person name="Breitenbach-Koller L."/>
            <person name="Grillari J."/>
        </authorList>
    </citation>
    <scope>DISRUPTION PHENOTYPE</scope>
</reference>
<gene>
    <name evidence="5 7" type="primary">Nsun5</name>
    <name evidence="7" type="ORF">CG42358</name>
</gene>
<evidence type="ECO:0000250" key="1">
    <source>
        <dbReference type="UniProtKB" id="Q96P11"/>
    </source>
</evidence>
<evidence type="ECO:0000250" key="2">
    <source>
        <dbReference type="UniProtKB" id="Q9NAA7"/>
    </source>
</evidence>
<evidence type="ECO:0000255" key="3">
    <source>
        <dbReference type="PROSITE-ProRule" id="PRU01023"/>
    </source>
</evidence>
<evidence type="ECO:0000269" key="4">
    <source>
    </source>
</evidence>
<evidence type="ECO:0000303" key="5">
    <source>
    </source>
</evidence>
<evidence type="ECO:0000305" key="6"/>
<evidence type="ECO:0000312" key="7">
    <source>
        <dbReference type="FlyBase" id="FBgn0259704"/>
    </source>
</evidence>